<protein>
    <recommendedName>
        <fullName evidence="1">Global transcriptional regulator CodY</fullName>
    </recommendedName>
</protein>
<dbReference type="EMBL" id="CP000962">
    <property type="protein sequence ID" value="ACA54666.1"/>
    <property type="molecule type" value="Genomic_DNA"/>
</dbReference>
<dbReference type="RefSeq" id="WP_012100385.1">
    <property type="nucleotide sequence ID" value="NC_010520.1"/>
</dbReference>
<dbReference type="SMR" id="B1KWM6"/>
<dbReference type="KEGG" id="cbl:CLK_1813"/>
<dbReference type="HOGENOM" id="CLU_089581_0_0_9"/>
<dbReference type="GO" id="GO:0005737">
    <property type="term" value="C:cytoplasm"/>
    <property type="evidence" value="ECO:0007669"/>
    <property type="project" value="UniProtKB-SubCell"/>
</dbReference>
<dbReference type="GO" id="GO:0003677">
    <property type="term" value="F:DNA binding"/>
    <property type="evidence" value="ECO:0007669"/>
    <property type="project" value="UniProtKB-UniRule"/>
</dbReference>
<dbReference type="GO" id="GO:0003700">
    <property type="term" value="F:DNA-binding transcription factor activity"/>
    <property type="evidence" value="ECO:0007669"/>
    <property type="project" value="InterPro"/>
</dbReference>
<dbReference type="GO" id="GO:0005525">
    <property type="term" value="F:GTP binding"/>
    <property type="evidence" value="ECO:0007669"/>
    <property type="project" value="InterPro"/>
</dbReference>
<dbReference type="GO" id="GO:0045892">
    <property type="term" value="P:negative regulation of DNA-templated transcription"/>
    <property type="evidence" value="ECO:0007669"/>
    <property type="project" value="UniProtKB-UniRule"/>
</dbReference>
<dbReference type="FunFam" id="1.10.10.10:FF:000034">
    <property type="entry name" value="GTP-sensing transcriptional pleiotropic repressor CodY"/>
    <property type="match status" value="1"/>
</dbReference>
<dbReference type="FunFam" id="3.30.450.40:FF:000003">
    <property type="entry name" value="GTP-sensing transcriptional pleiotropic repressor CodY"/>
    <property type="match status" value="1"/>
</dbReference>
<dbReference type="Gene3D" id="3.30.450.40">
    <property type="match status" value="1"/>
</dbReference>
<dbReference type="Gene3D" id="1.10.10.10">
    <property type="entry name" value="Winged helix-like DNA-binding domain superfamily/Winged helix DNA-binding domain"/>
    <property type="match status" value="1"/>
</dbReference>
<dbReference type="HAMAP" id="MF_00621">
    <property type="entry name" value="HTH_type_CodY"/>
    <property type="match status" value="1"/>
</dbReference>
<dbReference type="InterPro" id="IPR014154">
    <property type="entry name" value="CodY"/>
</dbReference>
<dbReference type="InterPro" id="IPR029016">
    <property type="entry name" value="GAF-like_dom_sf"/>
</dbReference>
<dbReference type="InterPro" id="IPR013198">
    <property type="entry name" value="GTP_trans_reg_CodY_C"/>
</dbReference>
<dbReference type="InterPro" id="IPR010312">
    <property type="entry name" value="Transc_reg_CodY_N"/>
</dbReference>
<dbReference type="InterPro" id="IPR036388">
    <property type="entry name" value="WH-like_DNA-bd_sf"/>
</dbReference>
<dbReference type="InterPro" id="IPR036390">
    <property type="entry name" value="WH_DNA-bd_sf"/>
</dbReference>
<dbReference type="NCBIfam" id="TIGR02787">
    <property type="entry name" value="codY_Gpos"/>
    <property type="match status" value="1"/>
</dbReference>
<dbReference type="NCBIfam" id="NF003170">
    <property type="entry name" value="PRK04158.1"/>
    <property type="match status" value="1"/>
</dbReference>
<dbReference type="PANTHER" id="PTHR40062:SF1">
    <property type="entry name" value="GLOBAL TRANSCRIPTIONAL REGULATOR CODY"/>
    <property type="match status" value="1"/>
</dbReference>
<dbReference type="PANTHER" id="PTHR40062">
    <property type="entry name" value="GTP-SENSING TRANSCRIPTIONAL PLEIOTROPIC REPRESSOR CODY"/>
    <property type="match status" value="1"/>
</dbReference>
<dbReference type="Pfam" id="PF06018">
    <property type="entry name" value="CodY"/>
    <property type="match status" value="1"/>
</dbReference>
<dbReference type="Pfam" id="PF08222">
    <property type="entry name" value="HTH_CodY"/>
    <property type="match status" value="1"/>
</dbReference>
<dbReference type="PIRSF" id="PIRSF011572">
    <property type="entry name" value="GTP_sensing_CodY"/>
    <property type="match status" value="1"/>
</dbReference>
<dbReference type="SUPFAM" id="SSF55781">
    <property type="entry name" value="GAF domain-like"/>
    <property type="match status" value="1"/>
</dbReference>
<dbReference type="SUPFAM" id="SSF46785">
    <property type="entry name" value="Winged helix' DNA-binding domain"/>
    <property type="match status" value="1"/>
</dbReference>
<evidence type="ECO:0000255" key="1">
    <source>
        <dbReference type="HAMAP-Rule" id="MF_00621"/>
    </source>
</evidence>
<sequence>MSSLLDKTRMLNRILQKSGTEPVDFEDICDLLSDVLACNVYIISRKGKILGSKFYSGFECEEVREVVLKENRFPDFYNNKLLNVNETLSNSPNHDKCVFDNLKDCSINNKLSTIVPINGNRERLGTLLLARFDKEFTDEDLILAEYSATIIGLEILRSKQDQIEEEARKKAVVQLAIGTLSYSELEAVEHIFNELDGTEGLLVASKIADKVGITRSVIVNALRKFESAGVIESRSLGMKGTHIRILNDKLLEELKKIK</sequence>
<gene>
    <name evidence="1" type="primary">codY</name>
    <name type="ordered locus">CLK_1813</name>
</gene>
<comment type="function">
    <text evidence="1">DNA-binding global transcriptional regulator which is involved in the adaptive response to starvation and acts by directly or indirectly controlling the expression of numerous genes in response to nutrient availability. During rapid exponential growth, CodY is highly active and represses genes whose products allow adaptation to nutrient depletion.</text>
</comment>
<comment type="subcellular location">
    <subcellularLocation>
        <location evidence="1">Cytoplasm</location>
    </subcellularLocation>
</comment>
<comment type="similarity">
    <text evidence="1">Belongs to the CodY family.</text>
</comment>
<proteinExistence type="inferred from homology"/>
<feature type="chain" id="PRO_1000130454" description="Global transcriptional regulator CodY">
    <location>
        <begin position="1"/>
        <end position="258"/>
    </location>
</feature>
<feature type="DNA-binding region" description="H-T-H motif" evidence="1">
    <location>
        <begin position="204"/>
        <end position="223"/>
    </location>
</feature>
<feature type="region of interest" description="GAF domain" evidence="1">
    <location>
        <begin position="1"/>
        <end position="156"/>
    </location>
</feature>
<name>CODY_CLOBM</name>
<reference key="1">
    <citation type="journal article" date="2007" name="PLoS ONE">
        <title>Analysis of the neurotoxin complex genes in Clostridium botulinum A1-A4 and B1 strains: BoNT/A3, /Ba4 and /B1 clusters are located within plasmids.</title>
        <authorList>
            <person name="Smith T.J."/>
            <person name="Hill K.K."/>
            <person name="Foley B.T."/>
            <person name="Detter J.C."/>
            <person name="Munk A.C."/>
            <person name="Bruce D.C."/>
            <person name="Doggett N.A."/>
            <person name="Smith L.A."/>
            <person name="Marks J.D."/>
            <person name="Xie G."/>
            <person name="Brettin T.S."/>
        </authorList>
    </citation>
    <scope>NUCLEOTIDE SEQUENCE [LARGE SCALE GENOMIC DNA]</scope>
    <source>
        <strain>Loch Maree / Type A3</strain>
    </source>
</reference>
<keyword id="KW-0963">Cytoplasm</keyword>
<keyword id="KW-0238">DNA-binding</keyword>
<keyword id="KW-0678">Repressor</keyword>
<keyword id="KW-0804">Transcription</keyword>
<keyword id="KW-0805">Transcription regulation</keyword>
<organism>
    <name type="scientific">Clostridium botulinum (strain Loch Maree / Type A3)</name>
    <dbReference type="NCBI Taxonomy" id="498214"/>
    <lineage>
        <taxon>Bacteria</taxon>
        <taxon>Bacillati</taxon>
        <taxon>Bacillota</taxon>
        <taxon>Clostridia</taxon>
        <taxon>Eubacteriales</taxon>
        <taxon>Clostridiaceae</taxon>
        <taxon>Clostridium</taxon>
    </lineage>
</organism>
<accession>B1KWM6</accession>